<protein>
    <recommendedName>
        <fullName evidence="1">Endonuclease NucS</fullName>
        <ecNumber evidence="1">3.1.-.-</ecNumber>
    </recommendedName>
</protein>
<feature type="chain" id="PRO_1000198204" description="Endonuclease NucS">
    <location>
        <begin position="1"/>
        <end position="223"/>
    </location>
</feature>
<comment type="function">
    <text evidence="1">Cleaves both 3' and 5' ssDNA extremities of branched DNA structures.</text>
</comment>
<comment type="subcellular location">
    <subcellularLocation>
        <location evidence="1">Cytoplasm</location>
    </subcellularLocation>
</comment>
<comment type="similarity">
    <text evidence="1">Belongs to the NucS endonuclease family.</text>
</comment>
<name>NUCS_STRGG</name>
<sequence length="223" mass="24553">MRLVIARCSVDYAGRLTAHLPSAPRLILVKADGSVSIHADDRAYKPLNWMSPPCTLKEGADGEAGVWTVVNKAGEKLIITMEEVLHDSSYELGVDPGLIKDGVEAHLQELLADRIEILGEGHTLIRREYPTAIGPVDILCRDANGQTVAVELKRRGDIDGVEQLTRYLELLNRDPHLAPVRGVFAAQEIKPQARVLATDRGIGCLVLDYDAMRGIEDDKLRLF</sequence>
<dbReference type="EC" id="3.1.-.-" evidence="1"/>
<dbReference type="EMBL" id="AP009493">
    <property type="protein sequence ID" value="BAG18978.1"/>
    <property type="molecule type" value="Genomic_DNA"/>
</dbReference>
<dbReference type="RefSeq" id="WP_003966235.1">
    <property type="nucleotide sequence ID" value="NC_010572.1"/>
</dbReference>
<dbReference type="SMR" id="B1W089"/>
<dbReference type="KEGG" id="sgr:SGR_2149"/>
<dbReference type="eggNOG" id="COG1637">
    <property type="taxonomic scope" value="Bacteria"/>
</dbReference>
<dbReference type="HOGENOM" id="CLU_069350_0_0_11"/>
<dbReference type="Proteomes" id="UP000001685">
    <property type="component" value="Chromosome"/>
</dbReference>
<dbReference type="GO" id="GO:0005737">
    <property type="term" value="C:cytoplasm"/>
    <property type="evidence" value="ECO:0007669"/>
    <property type="project" value="UniProtKB-SubCell"/>
</dbReference>
<dbReference type="GO" id="GO:0003677">
    <property type="term" value="F:DNA binding"/>
    <property type="evidence" value="ECO:0007669"/>
    <property type="project" value="UniProtKB-KW"/>
</dbReference>
<dbReference type="GO" id="GO:0000014">
    <property type="term" value="F:single-stranded DNA endodeoxyribonuclease activity"/>
    <property type="evidence" value="ECO:0007669"/>
    <property type="project" value="UniProtKB-UniRule"/>
</dbReference>
<dbReference type="CDD" id="cd22341">
    <property type="entry name" value="NucS-like"/>
    <property type="match status" value="1"/>
</dbReference>
<dbReference type="Gene3D" id="2.70.180.20">
    <property type="match status" value="1"/>
</dbReference>
<dbReference type="Gene3D" id="3.40.1350.10">
    <property type="match status" value="1"/>
</dbReference>
<dbReference type="HAMAP" id="MF_00722">
    <property type="entry name" value="NucS"/>
    <property type="match status" value="1"/>
</dbReference>
<dbReference type="InterPro" id="IPR002793">
    <property type="entry name" value="Endonuclease_NucS"/>
</dbReference>
<dbReference type="InterPro" id="IPR048301">
    <property type="entry name" value="NucS_C"/>
</dbReference>
<dbReference type="InterPro" id="IPR048302">
    <property type="entry name" value="NucS_N"/>
</dbReference>
<dbReference type="InterPro" id="IPR049173">
    <property type="entry name" value="NucS_N_sf"/>
</dbReference>
<dbReference type="InterPro" id="IPR011856">
    <property type="entry name" value="tRNA_endonuc-like_dom_sf"/>
</dbReference>
<dbReference type="NCBIfam" id="NF002876">
    <property type="entry name" value="PRK03298.1"/>
    <property type="match status" value="1"/>
</dbReference>
<dbReference type="PANTHER" id="PTHR38814">
    <property type="entry name" value="ENDONUCLEASE NUCS"/>
    <property type="match status" value="1"/>
</dbReference>
<dbReference type="PANTHER" id="PTHR38814:SF1">
    <property type="entry name" value="ENDONUCLEASE NUCS"/>
    <property type="match status" value="1"/>
</dbReference>
<dbReference type="Pfam" id="PF01939">
    <property type="entry name" value="NucS_C"/>
    <property type="match status" value="1"/>
</dbReference>
<dbReference type="Pfam" id="PF21003">
    <property type="entry name" value="NucS_N"/>
    <property type="match status" value="1"/>
</dbReference>
<evidence type="ECO:0000255" key="1">
    <source>
        <dbReference type="HAMAP-Rule" id="MF_00722"/>
    </source>
</evidence>
<reference key="1">
    <citation type="journal article" date="2008" name="J. Bacteriol.">
        <title>Genome sequence of the streptomycin-producing microorganism Streptomyces griseus IFO 13350.</title>
        <authorList>
            <person name="Ohnishi Y."/>
            <person name="Ishikawa J."/>
            <person name="Hara H."/>
            <person name="Suzuki H."/>
            <person name="Ikenoya M."/>
            <person name="Ikeda H."/>
            <person name="Yamashita A."/>
            <person name="Hattori M."/>
            <person name="Horinouchi S."/>
        </authorList>
    </citation>
    <scope>NUCLEOTIDE SEQUENCE [LARGE SCALE GENOMIC DNA]</scope>
    <source>
        <strain>JCM 4626 / CBS 651.72 / NBRC 13350 / KCC S-0626 / ISP 5235</strain>
    </source>
</reference>
<keyword id="KW-0963">Cytoplasm</keyword>
<keyword id="KW-0238">DNA-binding</keyword>
<keyword id="KW-0255">Endonuclease</keyword>
<keyword id="KW-0378">Hydrolase</keyword>
<keyword id="KW-0540">Nuclease</keyword>
<proteinExistence type="inferred from homology"/>
<accession>B1W089</accession>
<gene>
    <name evidence="1" type="primary">nucS</name>
    <name type="ordered locus">SGR_2149</name>
</gene>
<organism>
    <name type="scientific">Streptomyces griseus subsp. griseus (strain JCM 4626 / CBS 651.72 / NBRC 13350 / KCC S-0626 / ISP 5235)</name>
    <dbReference type="NCBI Taxonomy" id="455632"/>
    <lineage>
        <taxon>Bacteria</taxon>
        <taxon>Bacillati</taxon>
        <taxon>Actinomycetota</taxon>
        <taxon>Actinomycetes</taxon>
        <taxon>Kitasatosporales</taxon>
        <taxon>Streptomycetaceae</taxon>
        <taxon>Streptomyces</taxon>
    </lineage>
</organism>